<protein>
    <recommendedName>
        <fullName evidence="9">Peroxisome biogenesis factor 2</fullName>
        <ecNumber evidence="3">2.3.2.27</ecNumber>
        <ecNumber evidence="3">2.3.2.36</ecNumber>
    </recommendedName>
    <alternativeName>
        <fullName evidence="9">Peroxin-2</fullName>
    </alternativeName>
    <alternativeName>
        <fullName>Peroxisomal membrane protein 3</fullName>
    </alternativeName>
    <alternativeName>
        <fullName evidence="8">Peroxisome assembly factor 1</fullName>
        <shortName evidence="8">PAF-1</shortName>
    </alternativeName>
</protein>
<organism>
    <name type="scientific">Rattus norvegicus</name>
    <name type="common">Rat</name>
    <dbReference type="NCBI Taxonomy" id="10116"/>
    <lineage>
        <taxon>Eukaryota</taxon>
        <taxon>Metazoa</taxon>
        <taxon>Chordata</taxon>
        <taxon>Craniata</taxon>
        <taxon>Vertebrata</taxon>
        <taxon>Euteleostomi</taxon>
        <taxon>Mammalia</taxon>
        <taxon>Eutheria</taxon>
        <taxon>Euarchontoglires</taxon>
        <taxon>Glires</taxon>
        <taxon>Rodentia</taxon>
        <taxon>Myomorpha</taxon>
        <taxon>Muroidea</taxon>
        <taxon>Muridae</taxon>
        <taxon>Murinae</taxon>
        <taxon>Rattus</taxon>
    </lineage>
</organism>
<reference key="1">
    <citation type="journal article" date="1991" name="Nature">
        <title>Restoration by a 35K membrane protein of peroxisome assembly in a peroxisome-deficient mammalian cell mutant.</title>
        <authorList>
            <person name="Tsukamoto T."/>
            <person name="Miura S."/>
            <person name="Fujiki Y."/>
        </authorList>
    </citation>
    <scope>NUCLEOTIDE SEQUENCE [MRNA]</scope>
    <scope>FUNCTION</scope>
    <scope>SUBCELLULAR LOCATION</scope>
    <source>
        <strain>Sprague-Dawley</strain>
    </source>
</reference>
<reference key="2">
    <citation type="journal article" date="1994" name="Mol. Cell. Biol.">
        <title>Peroxisome assembly factor 1: nonsense mutation in a peroxisome-deficient Chinese hamster ovary cell mutant and deletion analysis.</title>
        <authorList>
            <person name="Tsukamoto T."/>
            <person name="Shimozawa N."/>
            <person name="Fujiki Y."/>
        </authorList>
    </citation>
    <scope>NUCLEOTIDE SEQUENCE [MRNA]</scope>
    <source>
        <strain>Sprague-Dawley</strain>
        <tissue>Liver</tissue>
    </source>
</reference>
<reference key="3">
    <citation type="journal article" date="2004" name="Genome Res.">
        <title>The status, quality, and expansion of the NIH full-length cDNA project: the Mammalian Gene Collection (MGC).</title>
        <authorList>
            <consortium name="The MGC Project Team"/>
        </authorList>
    </citation>
    <scope>NUCLEOTIDE SEQUENCE [LARGE SCALE MRNA]</scope>
    <source>
        <tissue>Pituitary</tissue>
    </source>
</reference>
<keyword id="KW-1015">Disulfide bond</keyword>
<keyword id="KW-0472">Membrane</keyword>
<keyword id="KW-0479">Metal-binding</keyword>
<keyword id="KW-0576">Peroxisome</keyword>
<keyword id="KW-0962">Peroxisome biogenesis</keyword>
<keyword id="KW-0653">Protein transport</keyword>
<keyword id="KW-1185">Reference proteome</keyword>
<keyword id="KW-0808">Transferase</keyword>
<keyword id="KW-0812">Transmembrane</keyword>
<keyword id="KW-1133">Transmembrane helix</keyword>
<keyword id="KW-0813">Transport</keyword>
<keyword id="KW-0833">Ubl conjugation pathway</keyword>
<keyword id="KW-0862">Zinc</keyword>
<keyword id="KW-0863">Zinc-finger</keyword>
<gene>
    <name type="primary">Pex2</name>
    <name type="synonym">Paf1</name>
    <name evidence="7" type="synonym">Pmp35</name>
    <name type="synonym">Pxmp3</name>
</gene>
<name>PEX2_RAT</name>
<accession>P24392</accession>
<accession>Q63733</accession>
<evidence type="ECO:0000250" key="1">
    <source>
        <dbReference type="UniProtKB" id="G2Q1C9"/>
    </source>
</evidence>
<evidence type="ECO:0000250" key="2">
    <source>
        <dbReference type="UniProtKB" id="P28328"/>
    </source>
</evidence>
<evidence type="ECO:0000250" key="3">
    <source>
        <dbReference type="UniProtKB" id="P32800"/>
    </source>
</evidence>
<evidence type="ECO:0000255" key="4"/>
<evidence type="ECO:0000255" key="5">
    <source>
        <dbReference type="PROSITE-ProRule" id="PRU00175"/>
    </source>
</evidence>
<evidence type="ECO:0000269" key="6">
    <source>
    </source>
</evidence>
<evidence type="ECO:0000303" key="7">
    <source>
    </source>
</evidence>
<evidence type="ECO:0000303" key="8">
    <source>
    </source>
</evidence>
<evidence type="ECO:0000305" key="9"/>
<sequence>MAAREESTQSANRVLRISQLDALELNKALEQLVWSQFTQCFHGFKPGLLARFEPEVKAFLWLFLWRFTIYSKNATVGQSVLNIQYKNDSSPNPVYQPPSKNQKLLYAVCTIGGRWLEERCYDLFRNRHLASFGKAKQCMNFVVGLLKLGELMNFLIFLQKGKFATLTERLLGIHSVFCKPQSMREVGFEYMNRELLWHGFAEFLVFLLPLINIQKLKAKLSSWCIPLTSTAGSDSTLGSSGKECALCGEWPTMPHTIGCEHVFCYYCVKSSFLFDMYFTCPKCGTEVHSVQPLKSGIEMSEVNAL</sequence>
<proteinExistence type="evidence at transcript level"/>
<comment type="function">
    <text evidence="2 3 6">E3 ubiquitin-protein ligase component of a retrotranslocation channel required for peroxisome organization by mediating export of the PEX5 receptor from peroxisomes to the cytosol, thereby promoting PEX5 recycling (PubMed:1750930). The retrotranslocation channel is composed of PEX2, PEX10 and PEX12; each subunit contributing transmembrane segments that coassemble into an open channel that specifically allows the passage of PEX5 through the peroxisomal membrane. PEX2 also regulates peroxisome organization by acting as a E3 ubiquitin-protein ligase. PEX2 ubiquitinates PEX5 during its passage through the retrotranslocation channel: catalyzes monoubiquitination of PEX5 at 'Cys-11', a modification that acts as a signal for PEX5 extraction into the cytosol (By similarity). Required for pexophagy in response to starvation by mediating ubiquitination of peroxisomal proteins, such as PEX5 and ABCD3/PMP70. Also involved in the response to reactive oxygen species (ROS) by mediating 'Lys-48'-linked polyubiquitination and subsequent degradation of PNPLA2/ATGL, thereby regulating lipolysis (By similarity).</text>
</comment>
<comment type="catalytic activity">
    <reaction evidence="3">
        <text>[E2 ubiquitin-conjugating enzyme]-S-ubiquitinyl-L-cysteine + [acceptor protein]-L-cysteine = [E2 ubiquitin-conjugating enzyme]-L-cysteine + [acceptor protein]-S-ubiquitinyl-L-cysteine.</text>
        <dbReference type="EC" id="2.3.2.36"/>
    </reaction>
</comment>
<comment type="catalytic activity">
    <reaction evidence="2">
        <text>S-ubiquitinyl-[E2 ubiquitin-conjugating enzyme]-L-cysteine + [acceptor protein]-L-lysine = [E2 ubiquitin-conjugating enzyme]-L-cysteine + N(6)-ubiquitinyl-[acceptor protein]-L-lysine.</text>
        <dbReference type="EC" id="2.3.2.27"/>
    </reaction>
</comment>
<comment type="pathway">
    <text evidence="2">Protein modification; protein ubiquitination.</text>
</comment>
<comment type="subunit">
    <text evidence="2">Component of the PEX2-PEX10-PEX12 retrotranslocation channel, composed of PEX2, PEX10 and PEX12.</text>
</comment>
<comment type="subcellular location">
    <subcellularLocation>
        <location evidence="6">Peroxisome membrane</location>
        <topology evidence="4">Multi-pass membrane protein</topology>
    </subcellularLocation>
</comment>
<comment type="domain">
    <text evidence="1">The three subunits of the retrotranslocation channel (PEX2, PEX10 and PEX12) coassemble in the membrane into a channel with an open 10 Angstrom pore. The RING-type zinc-fingers that catalyze PEX5 receptor ubiquitination are positioned above the pore on the cytosolic side of the complex.</text>
</comment>
<comment type="PTM">
    <text evidence="2">Forms intramolecular and intermolecular disulfide bonds in response to reactive oxygen species (ROS), promoting higher stability.</text>
</comment>
<comment type="similarity">
    <text evidence="9">Belongs to the pex2/pex10/pex12 family.</text>
</comment>
<feature type="chain" id="PRO_0000056371" description="Peroxisome biogenesis factor 2">
    <location>
        <begin position="1"/>
        <end position="305"/>
    </location>
</feature>
<feature type="topological domain" description="Peroxisomal matrix" evidence="1">
    <location>
        <begin position="1"/>
        <end position="15"/>
    </location>
</feature>
<feature type="transmembrane region" description="Helical; Name=TM1" evidence="1">
    <location>
        <begin position="16"/>
        <end position="42"/>
    </location>
</feature>
<feature type="topological domain" description="Cytoplasmic" evidence="1">
    <location>
        <begin position="43"/>
        <end position="48"/>
    </location>
</feature>
<feature type="transmembrane region" description="Helical; Name=TM2" evidence="1">
    <location>
        <begin position="49"/>
        <end position="74"/>
    </location>
</feature>
<feature type="topological domain" description="Peroxisomal matrix" evidence="1">
    <location>
        <begin position="75"/>
        <end position="98"/>
    </location>
</feature>
<feature type="transmembrane region" description="Helical; Name=TM3" evidence="1">
    <location>
        <begin position="99"/>
        <end position="125"/>
    </location>
</feature>
<feature type="topological domain" description="Cytoplasmic" evidence="1">
    <location>
        <begin position="126"/>
        <end position="133"/>
    </location>
</feature>
<feature type="transmembrane region" description="Helical; Name=TM4" evidence="1">
    <location>
        <begin position="134"/>
        <end position="160"/>
    </location>
</feature>
<feature type="topological domain" description="Peroxisomal matrix" evidence="1">
    <location>
        <begin position="161"/>
        <end position="187"/>
    </location>
</feature>
<feature type="transmembrane region" description="Helical; Name=TM5" evidence="1">
    <location>
        <begin position="188"/>
        <end position="211"/>
    </location>
</feature>
<feature type="topological domain" description="Cytoplasmic" evidence="1">
    <location>
        <begin position="212"/>
        <end position="305"/>
    </location>
</feature>
<feature type="zinc finger region" description="RING-type" evidence="5">
    <location>
        <begin position="244"/>
        <end position="284"/>
    </location>
</feature>
<feature type="binding site" evidence="1">
    <location>
        <position position="244"/>
    </location>
    <ligand>
        <name>Zn(2+)</name>
        <dbReference type="ChEBI" id="CHEBI:29105"/>
        <label>1</label>
    </ligand>
</feature>
<feature type="binding site" evidence="1">
    <location>
        <position position="247"/>
    </location>
    <ligand>
        <name>Zn(2+)</name>
        <dbReference type="ChEBI" id="CHEBI:29105"/>
        <label>1</label>
    </ligand>
</feature>
<feature type="binding site" evidence="1">
    <location>
        <position position="259"/>
    </location>
    <ligand>
        <name>Zn(2+)</name>
        <dbReference type="ChEBI" id="CHEBI:29105"/>
        <label>2</label>
    </ligand>
</feature>
<feature type="binding site" evidence="1">
    <location>
        <position position="261"/>
    </location>
    <ligand>
        <name>Zn(2+)</name>
        <dbReference type="ChEBI" id="CHEBI:29105"/>
        <label>2</label>
    </ligand>
</feature>
<feature type="binding site" evidence="1">
    <location>
        <position position="264"/>
    </location>
    <ligand>
        <name>Zn(2+)</name>
        <dbReference type="ChEBI" id="CHEBI:29105"/>
        <label>1</label>
    </ligand>
</feature>
<feature type="binding site" evidence="1">
    <location>
        <position position="267"/>
    </location>
    <ligand>
        <name>Zn(2+)</name>
        <dbReference type="ChEBI" id="CHEBI:29105"/>
        <label>1</label>
    </ligand>
</feature>
<feature type="binding site" evidence="1">
    <location>
        <position position="280"/>
    </location>
    <ligand>
        <name>Zn(2+)</name>
        <dbReference type="ChEBI" id="CHEBI:29105"/>
        <label>2</label>
    </ligand>
</feature>
<feature type="binding site" evidence="1">
    <location>
        <position position="283"/>
    </location>
    <ligand>
        <name>Zn(2+)</name>
        <dbReference type="ChEBI" id="CHEBI:29105"/>
        <label>2</label>
    </ligand>
</feature>
<feature type="sequence variant">
    <original>R</original>
    <variation>P</variation>
    <location>
        <position position="125"/>
    </location>
</feature>
<dbReference type="EC" id="2.3.2.27" evidence="3"/>
<dbReference type="EC" id="2.3.2.36" evidence="3"/>
<dbReference type="EMBL" id="X57988">
    <property type="protein sequence ID" value="CAA41054.1"/>
    <property type="molecule type" value="mRNA"/>
</dbReference>
<dbReference type="EMBL" id="D30616">
    <property type="protein sequence ID" value="BAA06306.1"/>
    <property type="molecule type" value="mRNA"/>
</dbReference>
<dbReference type="EMBL" id="D30617">
    <property type="protein sequence ID" value="BAA06307.1"/>
    <property type="molecule type" value="mRNA"/>
</dbReference>
<dbReference type="EMBL" id="BC063169">
    <property type="protein sequence ID" value="AAH63169.1"/>
    <property type="molecule type" value="mRNA"/>
</dbReference>
<dbReference type="PIR" id="B53782">
    <property type="entry name" value="B53782"/>
</dbReference>
<dbReference type="RefSeq" id="NP_001375433.1">
    <property type="nucleotide sequence ID" value="NM_001388504.1"/>
</dbReference>
<dbReference type="RefSeq" id="NP_001375434.1">
    <property type="nucleotide sequence ID" value="NM_001388505.1"/>
</dbReference>
<dbReference type="RefSeq" id="NP_058930.2">
    <property type="nucleotide sequence ID" value="NM_017234.2"/>
</dbReference>
<dbReference type="RefSeq" id="XP_006232222.1">
    <property type="nucleotide sequence ID" value="XM_006232160.3"/>
</dbReference>
<dbReference type="RefSeq" id="XP_006232223.1">
    <property type="nucleotide sequence ID" value="XM_006232161.2"/>
</dbReference>
<dbReference type="RefSeq" id="XP_063137709.1">
    <property type="nucleotide sequence ID" value="XM_063281639.1"/>
</dbReference>
<dbReference type="SMR" id="P24392"/>
<dbReference type="CORUM" id="P24392"/>
<dbReference type="FunCoup" id="P24392">
    <property type="interactions" value="1764"/>
</dbReference>
<dbReference type="STRING" id="10116.ENSRNOP00000011579"/>
<dbReference type="PhosphoSitePlus" id="P24392"/>
<dbReference type="PaxDb" id="10116-ENSRNOP00000011579"/>
<dbReference type="Ensembl" id="ENSRNOT00000095560.1">
    <property type="protein sequence ID" value="ENSRNOP00000076831.1"/>
    <property type="gene ID" value="ENSRNOG00000008748.5"/>
</dbReference>
<dbReference type="GeneID" id="29534"/>
<dbReference type="KEGG" id="rno:29534"/>
<dbReference type="UCSC" id="RGD:61814">
    <property type="organism name" value="rat"/>
</dbReference>
<dbReference type="AGR" id="RGD:61814"/>
<dbReference type="CTD" id="5828"/>
<dbReference type="RGD" id="61814">
    <property type="gene designation" value="Pex2"/>
</dbReference>
<dbReference type="eggNOG" id="KOG2879">
    <property type="taxonomic scope" value="Eukaryota"/>
</dbReference>
<dbReference type="GeneTree" id="ENSGT00390000001846"/>
<dbReference type="HOGENOM" id="CLU_024591_3_1_1"/>
<dbReference type="InParanoid" id="P24392"/>
<dbReference type="OMA" id="WHGLMEL"/>
<dbReference type="PhylomeDB" id="P24392"/>
<dbReference type="TreeFam" id="TF105312"/>
<dbReference type="Reactome" id="R-RNO-8866654">
    <property type="pathway name" value="E3 ubiquitin ligases ubiquitinate target proteins"/>
</dbReference>
<dbReference type="Reactome" id="R-RNO-9033241">
    <property type="pathway name" value="Peroxisomal protein import"/>
</dbReference>
<dbReference type="Reactome" id="R-RNO-9603798">
    <property type="pathway name" value="Class I peroxisomal membrane protein import"/>
</dbReference>
<dbReference type="UniPathway" id="UPA00143"/>
<dbReference type="PRO" id="PR:P24392"/>
<dbReference type="Proteomes" id="UP000002494">
    <property type="component" value="Chromosome 2"/>
</dbReference>
<dbReference type="Bgee" id="ENSRNOG00000008748">
    <property type="expression patterns" value="Expressed in quadriceps femoris and 20 other cell types or tissues"/>
</dbReference>
<dbReference type="GO" id="GO:0016593">
    <property type="term" value="C:Cdc73/Paf1 complex"/>
    <property type="evidence" value="ECO:0000266"/>
    <property type="project" value="RGD"/>
</dbReference>
<dbReference type="GO" id="GO:0005778">
    <property type="term" value="C:peroxisomal membrane"/>
    <property type="evidence" value="ECO:0000314"/>
    <property type="project" value="HGNC-UCL"/>
</dbReference>
<dbReference type="GO" id="GO:0005777">
    <property type="term" value="C:peroxisome"/>
    <property type="evidence" value="ECO:0000314"/>
    <property type="project" value="HGNC-UCL"/>
</dbReference>
<dbReference type="GO" id="GO:0061630">
    <property type="term" value="F:ubiquitin protein ligase activity"/>
    <property type="evidence" value="ECO:0000250"/>
    <property type="project" value="UniProtKB"/>
</dbReference>
<dbReference type="GO" id="GO:0008270">
    <property type="term" value="F:zinc ion binding"/>
    <property type="evidence" value="ECO:0007669"/>
    <property type="project" value="UniProtKB-KW"/>
</dbReference>
<dbReference type="GO" id="GO:0006699">
    <property type="term" value="P:bile acid biosynthetic process"/>
    <property type="evidence" value="ECO:0000266"/>
    <property type="project" value="RGD"/>
</dbReference>
<dbReference type="GO" id="GO:0034614">
    <property type="term" value="P:cellular response to reactive oxygen species"/>
    <property type="evidence" value="ECO:0000266"/>
    <property type="project" value="RGD"/>
</dbReference>
<dbReference type="GO" id="GO:0042632">
    <property type="term" value="P:cholesterol homeostasis"/>
    <property type="evidence" value="ECO:0000266"/>
    <property type="project" value="RGD"/>
</dbReference>
<dbReference type="GO" id="GO:0006635">
    <property type="term" value="P:fatty acid beta-oxidation"/>
    <property type="evidence" value="ECO:0000266"/>
    <property type="project" value="RGD"/>
</dbReference>
<dbReference type="GO" id="GO:0050680">
    <property type="term" value="P:negative regulation of epithelial cell proliferation"/>
    <property type="evidence" value="ECO:0000266"/>
    <property type="project" value="RGD"/>
</dbReference>
<dbReference type="GO" id="GO:0048147">
    <property type="term" value="P:negative regulation of fibroblast proliferation"/>
    <property type="evidence" value="ECO:0000266"/>
    <property type="project" value="RGD"/>
</dbReference>
<dbReference type="GO" id="GO:0007399">
    <property type="term" value="P:nervous system development"/>
    <property type="evidence" value="ECO:0000266"/>
    <property type="project" value="RGD"/>
</dbReference>
<dbReference type="GO" id="GO:0001764">
    <property type="term" value="P:neuron migration"/>
    <property type="evidence" value="ECO:0000266"/>
    <property type="project" value="RGD"/>
</dbReference>
<dbReference type="GO" id="GO:0007031">
    <property type="term" value="P:peroxisome organization"/>
    <property type="evidence" value="ECO:0000266"/>
    <property type="project" value="RGD"/>
</dbReference>
<dbReference type="GO" id="GO:0000425">
    <property type="term" value="P:pexophagy"/>
    <property type="evidence" value="ECO:0000250"/>
    <property type="project" value="UniProtKB"/>
</dbReference>
<dbReference type="GO" id="GO:0031648">
    <property type="term" value="P:protein destabilization"/>
    <property type="evidence" value="ECO:0000266"/>
    <property type="project" value="RGD"/>
</dbReference>
<dbReference type="GO" id="GO:0016558">
    <property type="term" value="P:protein import into peroxisome matrix"/>
    <property type="evidence" value="ECO:0000266"/>
    <property type="project" value="RGD"/>
</dbReference>
<dbReference type="GO" id="GO:0016562">
    <property type="term" value="P:protein import into peroxisome matrix, receptor recycling"/>
    <property type="evidence" value="ECO:0000250"/>
    <property type="project" value="UniProtKB"/>
</dbReference>
<dbReference type="GO" id="GO:0006513">
    <property type="term" value="P:protein monoubiquitination"/>
    <property type="evidence" value="ECO:0000266"/>
    <property type="project" value="RGD"/>
</dbReference>
<dbReference type="GO" id="GO:0045540">
    <property type="term" value="P:regulation of cholesterol biosynthetic process"/>
    <property type="evidence" value="ECO:0000266"/>
    <property type="project" value="RGD"/>
</dbReference>
<dbReference type="GO" id="GO:1990928">
    <property type="term" value="P:response to amino acid starvation"/>
    <property type="evidence" value="ECO:0000250"/>
    <property type="project" value="UniProtKB"/>
</dbReference>
<dbReference type="GO" id="GO:0000038">
    <property type="term" value="P:very long-chain fatty acid metabolic process"/>
    <property type="evidence" value="ECO:0000266"/>
    <property type="project" value="RGD"/>
</dbReference>
<dbReference type="CDD" id="cd16526">
    <property type="entry name" value="RING-HC_PEX2"/>
    <property type="match status" value="1"/>
</dbReference>
<dbReference type="FunFam" id="3.30.40.10:FF:000480">
    <property type="entry name" value="Peroxisome biogenesis factor 2"/>
    <property type="match status" value="1"/>
</dbReference>
<dbReference type="Gene3D" id="3.30.40.10">
    <property type="entry name" value="Zinc/RING finger domain, C3HC4 (zinc finger)"/>
    <property type="match status" value="1"/>
</dbReference>
<dbReference type="InterPro" id="IPR025654">
    <property type="entry name" value="PEX2/10"/>
</dbReference>
<dbReference type="InterPro" id="IPR006845">
    <property type="entry name" value="Pex_N"/>
</dbReference>
<dbReference type="InterPro" id="IPR045859">
    <property type="entry name" value="RING-HC_PEX2"/>
</dbReference>
<dbReference type="InterPro" id="IPR001841">
    <property type="entry name" value="Znf_RING"/>
</dbReference>
<dbReference type="InterPro" id="IPR013083">
    <property type="entry name" value="Znf_RING/FYVE/PHD"/>
</dbReference>
<dbReference type="InterPro" id="IPR017907">
    <property type="entry name" value="Znf_RING_CS"/>
</dbReference>
<dbReference type="PANTHER" id="PTHR48178">
    <property type="entry name" value="PEROXISOME BIOGENESIS FACTOR 2"/>
    <property type="match status" value="1"/>
</dbReference>
<dbReference type="PANTHER" id="PTHR48178:SF1">
    <property type="entry name" value="PEROXISOME BIOGENESIS FACTOR 2"/>
    <property type="match status" value="1"/>
</dbReference>
<dbReference type="Pfam" id="PF04757">
    <property type="entry name" value="Pex2_Pex12"/>
    <property type="match status" value="1"/>
</dbReference>
<dbReference type="SMART" id="SM00184">
    <property type="entry name" value="RING"/>
    <property type="match status" value="1"/>
</dbReference>
<dbReference type="SUPFAM" id="SSF57850">
    <property type="entry name" value="RING/U-box"/>
    <property type="match status" value="1"/>
</dbReference>
<dbReference type="PROSITE" id="PS00518">
    <property type="entry name" value="ZF_RING_1"/>
    <property type="match status" value="1"/>
</dbReference>
<dbReference type="PROSITE" id="PS50089">
    <property type="entry name" value="ZF_RING_2"/>
    <property type="match status" value="1"/>
</dbReference>